<gene>
    <name type="primary">pst2</name>
    <name type="ORF">SPAC23C11.15</name>
</gene>
<sequence>MEQTLAILKNDNSTLVAEMQNQLVHDFSPNGTALPELDIKAFVQKLGQRLCHRPYVYSAFMDVVKALHNEIVDFPGFIERISVILRDYPDLLEYLNIFLPSSYKYLLSNSGANFTLQFTTPSGPVSTPSTYVATYNDLPCTYHRAIGFVSRVRRALLSNPEQFFKLQDSLRKFKNSECSLSELQTIVTSLLAEHPSLAHEFHNFLPSSIFFGSKPPLGSFPLRGIQSSQFTLSNISDLLSQSRPDNLSPFSHLSNESSDFFKNVKNVLTDVETYHEFLKLLNLYVQGIIDRNILVSRGFGFLKSNSGLWRSFLSLTSLSPEEFLSVYNSACSDFPECGPSYRLLPVEERNISCSGRDDFAWGILNDDWVSHPTWASEESGFIVQRKTPYEEAMTKLEEERYEFDRHIEATSWTIKSLKKIQNRINELPEEERETYTLEEGLGLPSKSIYKKTIKLVYTSEHAEEMFKALERMPCLTLPLVISRLEEKNEEWKSVKRSLQPGWRSIEFKNYDKSLDSQCVYFKARDKKNVSSKFLLAEADILRSQAKLHFPLRSRSAFEFSFVYDNEIVLFDTCYMVCTYIVCNSPSGLKKVEHFFKNILPLHFGLEKDKFSIFLDQVFRGPDYDVNAPNIVGNKPVRRKRSNSITQLTEFVKQPKINGQRESRSAAAARKKEESGNKSQSNSQNSLSDESGNVTPVSKKQLSQPAAAIKASLKYPSHPDSLLEHQDHAGDTENEMHDDVDKEQFGYSSMYVFFRLFNLLYERLYELQRLEDQVSIIQQRIIPNPVSQKQKIWRDRWNDLSDVPDEKTHYENTYVMILRLIYGIVDQSAFEDYLRFYYGNKAYKIYTIDKLVWSAAKQVHHIVSDGKYKFVTSLVEQNSSASPKKNYDDFLYRLEIEKLLNPDEILFRFCWINKFKSFGIKIMKRANLIVDQSLDTQRRVWKKYVQNYRIQKLTEEISYKNYRCPFLCRNIEKERTVEQLVSRLQTKLLRSAELVSGLQAKLCLDSFKLLYLPRTEDSYIDASYLRLRDTDFLDCQNKRKQRWRNRWESLLKSVRGTSDNTAEVNFDADINALFIP</sequence>
<feature type="chain" id="PRO_0000121542" description="Paired amphipathic helix protein pst2">
    <location>
        <begin position="1"/>
        <end position="1075"/>
    </location>
</feature>
<feature type="domain" description="PAH 1" evidence="1">
    <location>
        <begin position="28"/>
        <end position="102"/>
    </location>
</feature>
<feature type="domain" description="PAH 2" evidence="1">
    <location>
        <begin position="138"/>
        <end position="208"/>
    </location>
</feature>
<feature type="domain" description="PAH 3" evidence="1">
    <location>
        <begin position="243"/>
        <end position="319"/>
    </location>
</feature>
<feature type="region of interest" description="Disordered" evidence="2">
    <location>
        <begin position="647"/>
        <end position="700"/>
    </location>
</feature>
<feature type="compositionally biased region" description="Basic and acidic residues" evidence="2">
    <location>
        <begin position="658"/>
        <end position="675"/>
    </location>
</feature>
<feature type="compositionally biased region" description="Low complexity" evidence="2">
    <location>
        <begin position="676"/>
        <end position="691"/>
    </location>
</feature>
<feature type="modified residue" description="Phosphoserine" evidence="4">
    <location>
        <position position="641"/>
    </location>
</feature>
<feature type="modified residue" description="Phosphoserine" evidence="4">
    <location>
        <position position="643"/>
    </location>
</feature>
<feature type="helix" evidence="5">
    <location>
        <begin position="41"/>
        <end position="49"/>
    </location>
</feature>
<feature type="helix" evidence="5">
    <location>
        <begin position="54"/>
        <end position="68"/>
    </location>
</feature>
<feature type="helix" evidence="5">
    <location>
        <begin position="74"/>
        <end position="84"/>
    </location>
</feature>
<feature type="strand" evidence="5">
    <location>
        <begin position="85"/>
        <end position="87"/>
    </location>
</feature>
<feature type="helix" evidence="5">
    <location>
        <begin position="89"/>
        <end position="95"/>
    </location>
</feature>
<feature type="turn" evidence="5">
    <location>
        <begin position="96"/>
        <end position="98"/>
    </location>
</feature>
<feature type="turn" evidence="5">
    <location>
        <begin position="109"/>
        <end position="111"/>
    </location>
</feature>
<feature type="strand" evidence="5">
    <location>
        <begin position="114"/>
        <end position="117"/>
    </location>
</feature>
<feature type="strand" evidence="5">
    <location>
        <begin position="122"/>
        <end position="124"/>
    </location>
</feature>
<feature type="helix" evidence="5">
    <location>
        <begin position="138"/>
        <end position="155"/>
    </location>
</feature>
<feature type="turn" evidence="5">
    <location>
        <begin position="160"/>
        <end position="163"/>
    </location>
</feature>
<feature type="helix" evidence="5">
    <location>
        <begin position="164"/>
        <end position="175"/>
    </location>
</feature>
<feature type="helix" evidence="5">
    <location>
        <begin position="180"/>
        <end position="190"/>
    </location>
</feature>
<feature type="turn" evidence="5">
    <location>
        <begin position="195"/>
        <end position="200"/>
    </location>
</feature>
<feature type="helix" evidence="5">
    <location>
        <begin position="201"/>
        <end position="203"/>
    </location>
</feature>
<feature type="turn" evidence="5">
    <location>
        <begin position="206"/>
        <end position="209"/>
    </location>
</feature>
<feature type="strand" evidence="5">
    <location>
        <begin position="222"/>
        <end position="225"/>
    </location>
</feature>
<feature type="helix" evidence="5">
    <location>
        <begin position="237"/>
        <end position="240"/>
    </location>
</feature>
<feature type="helix" evidence="5">
    <location>
        <begin position="257"/>
        <end position="267"/>
    </location>
</feature>
<feature type="helix" evidence="5">
    <location>
        <begin position="271"/>
        <end position="285"/>
    </location>
</feature>
<feature type="helix" evidence="5">
    <location>
        <begin position="291"/>
        <end position="297"/>
    </location>
</feature>
<feature type="turn" evidence="5">
    <location>
        <begin position="299"/>
        <end position="301"/>
    </location>
</feature>
<feature type="helix" evidence="5">
    <location>
        <begin position="308"/>
        <end position="315"/>
    </location>
</feature>
<feature type="helix" evidence="5">
    <location>
        <begin position="320"/>
        <end position="327"/>
    </location>
</feature>
<feature type="turn" evidence="5">
    <location>
        <begin position="328"/>
        <end position="330"/>
    </location>
</feature>
<feature type="turn" evidence="5">
    <location>
        <begin position="335"/>
        <end position="337"/>
    </location>
</feature>
<feature type="helix" evidence="5">
    <location>
        <begin position="348"/>
        <end position="350"/>
    </location>
</feature>
<feature type="turn" evidence="5">
    <location>
        <begin position="359"/>
        <end position="363"/>
    </location>
</feature>
<feature type="strand" evidence="5">
    <location>
        <begin position="367"/>
        <end position="369"/>
    </location>
</feature>
<feature type="strand" evidence="5">
    <location>
        <begin position="375"/>
        <end position="377"/>
    </location>
</feature>
<feature type="turn" evidence="5">
    <location>
        <begin position="388"/>
        <end position="392"/>
    </location>
</feature>
<feature type="helix" evidence="5">
    <location>
        <begin position="393"/>
        <end position="424"/>
    </location>
</feature>
<feature type="turn" evidence="5">
    <location>
        <begin position="429"/>
        <end position="431"/>
    </location>
</feature>
<feature type="helix" evidence="5">
    <location>
        <begin position="432"/>
        <end position="434"/>
    </location>
</feature>
<feature type="helix" evidence="5">
    <location>
        <begin position="446"/>
        <end position="456"/>
    </location>
</feature>
<feature type="helix" evidence="5">
    <location>
        <begin position="459"/>
        <end position="461"/>
    </location>
</feature>
<feature type="helix" evidence="5">
    <location>
        <begin position="462"/>
        <end position="471"/>
    </location>
</feature>
<feature type="turn" evidence="5">
    <location>
        <begin position="473"/>
        <end position="475"/>
    </location>
</feature>
<feature type="helix" evidence="5">
    <location>
        <begin position="476"/>
        <end position="496"/>
    </location>
</feature>
<feature type="helix" evidence="5">
    <location>
        <begin position="499"/>
        <end position="509"/>
    </location>
</feature>
<feature type="helix" evidence="5">
    <location>
        <begin position="511"/>
        <end position="513"/>
    </location>
</feature>
<feature type="helix" evidence="5">
    <location>
        <begin position="517"/>
        <end position="528"/>
    </location>
</feature>
<feature type="helix" evidence="5">
    <location>
        <begin position="531"/>
        <end position="548"/>
    </location>
</feature>
<feature type="helix" evidence="5">
    <location>
        <begin position="566"/>
        <end position="583"/>
    </location>
</feature>
<feature type="strand" evidence="5">
    <location>
        <begin position="588"/>
        <end position="590"/>
    </location>
</feature>
<feature type="helix" evidence="5">
    <location>
        <begin position="591"/>
        <end position="603"/>
    </location>
</feature>
<feature type="strand" evidence="5">
    <location>
        <begin position="607"/>
        <end position="609"/>
    </location>
</feature>
<feature type="helix" evidence="5">
    <location>
        <begin position="610"/>
        <end position="613"/>
    </location>
</feature>
<feature type="helix" evidence="5">
    <location>
        <begin position="615"/>
        <end position="618"/>
    </location>
</feature>
<feature type="strand" evidence="5">
    <location>
        <begin position="743"/>
        <end position="745"/>
    </location>
</feature>
<feature type="helix" evidence="5">
    <location>
        <begin position="747"/>
        <end position="769"/>
    </location>
</feature>
<feature type="turn" evidence="5">
    <location>
        <begin position="773"/>
        <end position="775"/>
    </location>
</feature>
<feature type="strand" evidence="5">
    <location>
        <begin position="776"/>
        <end position="778"/>
    </location>
</feature>
<feature type="helix" evidence="5">
    <location>
        <begin position="784"/>
        <end position="787"/>
    </location>
</feature>
<feature type="strand" evidence="5">
    <location>
        <begin position="788"/>
        <end position="790"/>
    </location>
</feature>
<feature type="helix" evidence="5">
    <location>
        <begin position="808"/>
        <end position="821"/>
    </location>
</feature>
<feature type="helix" evidence="5">
    <location>
        <begin position="826"/>
        <end position="837"/>
    </location>
</feature>
<feature type="helix" evidence="5">
    <location>
        <begin position="847"/>
        <end position="858"/>
    </location>
</feature>
<feature type="turn" evidence="5">
    <location>
        <begin position="859"/>
        <end position="862"/>
    </location>
</feature>
<feature type="turn" evidence="5">
    <location>
        <begin position="864"/>
        <end position="866"/>
    </location>
</feature>
<feature type="helix" evidence="5">
    <location>
        <begin position="867"/>
        <end position="876"/>
    </location>
</feature>
<feature type="helix" evidence="5">
    <location>
        <begin position="887"/>
        <end position="895"/>
    </location>
</feature>
<feature type="strand" evidence="5">
    <location>
        <begin position="902"/>
        <end position="911"/>
    </location>
</feature>
<feature type="turn" evidence="5">
    <location>
        <begin position="912"/>
        <end position="915"/>
    </location>
</feature>
<feature type="strand" evidence="5">
    <location>
        <begin position="916"/>
        <end position="919"/>
    </location>
</feature>
<feature type="strand" evidence="5">
    <location>
        <begin position="921"/>
        <end position="924"/>
    </location>
</feature>
<feature type="turn" evidence="5">
    <location>
        <begin position="967"/>
        <end position="970"/>
    </location>
</feature>
<feature type="strand" evidence="5">
    <location>
        <begin position="974"/>
        <end position="976"/>
    </location>
</feature>
<feature type="helix" evidence="5">
    <location>
        <begin position="977"/>
        <end position="988"/>
    </location>
</feature>
<feature type="strand" evidence="5">
    <location>
        <begin position="991"/>
        <end position="995"/>
    </location>
</feature>
<feature type="strand" evidence="5">
    <location>
        <begin position="1015"/>
        <end position="1019"/>
    </location>
</feature>
<feature type="helix" evidence="5">
    <location>
        <begin position="1023"/>
        <end position="1025"/>
    </location>
</feature>
<feature type="helix" evidence="5">
    <location>
        <begin position="1030"/>
        <end position="1050"/>
    </location>
</feature>
<name>PST2_SCHPO</name>
<accession>O13919</accession>
<comment type="function">
    <text evidence="3">Has a role in chromatin assembly and chromosome segregation. Involved in the deacetylation of histones.</text>
</comment>
<comment type="subunit">
    <text evidence="3">Heterotetramer of alp13, clr6, prw1 and pst2.</text>
</comment>
<comment type="interaction">
    <interactant intactId="EBI-904686">
        <id>O13919</id>
    </interactant>
    <interactant intactId="EBI-904711">
        <id>O13953</id>
        <label>alp13</label>
    </interactant>
    <organismsDiffer>false</organismsDiffer>
    <experiments>4</experiments>
</comment>
<comment type="interaction">
    <interactant intactId="EBI-904686">
        <id>O13919</id>
    </interactant>
    <interactant intactId="EBI-904651">
        <id>O59702</id>
        <label>clr6</label>
    </interactant>
    <organismsDiffer>false</organismsDiffer>
    <experiments>7</experiments>
</comment>
<comment type="interaction">
    <interactant intactId="EBI-904686">
        <id>O13919</id>
    </interactant>
    <interactant intactId="EBI-904698">
        <id>O14021</id>
        <label>prw1</label>
    </interactant>
    <organismsDiffer>false</organismsDiffer>
    <experiments>3</experiments>
</comment>
<comment type="subcellular location">
    <subcellularLocation>
        <location evidence="1 3">Nucleus</location>
    </subcellularLocation>
</comment>
<dbReference type="EMBL" id="CU329670">
    <property type="protein sequence ID" value="CAB11171.1"/>
    <property type="molecule type" value="Genomic_DNA"/>
</dbReference>
<dbReference type="PIR" id="T38253">
    <property type="entry name" value="T38253"/>
</dbReference>
<dbReference type="RefSeq" id="NP_593646.1">
    <property type="nucleotide sequence ID" value="NM_001019077.2"/>
</dbReference>
<dbReference type="PDB" id="8I02">
    <property type="method" value="EM"/>
    <property type="resolution" value="2.90 A"/>
    <property type="chains" value="A=1-1075"/>
</dbReference>
<dbReference type="PDB" id="8IFG">
    <property type="method" value="EM"/>
    <property type="resolution" value="3.20 A"/>
    <property type="chains" value="A=1-1075"/>
</dbReference>
<dbReference type="PDBsum" id="8I02"/>
<dbReference type="PDBsum" id="8IFG"/>
<dbReference type="EMDB" id="EMD-35092"/>
<dbReference type="EMDB" id="EMD-35416"/>
<dbReference type="SMR" id="O13919"/>
<dbReference type="BioGRID" id="278120">
    <property type="interactions" value="253"/>
</dbReference>
<dbReference type="ComplexPortal" id="CPX-9124">
    <property type="entry name" value="RPD3S histone deacetylase complex"/>
</dbReference>
<dbReference type="DIP" id="DIP-29341N"/>
<dbReference type="FunCoup" id="O13919">
    <property type="interactions" value="17"/>
</dbReference>
<dbReference type="IntAct" id="O13919">
    <property type="interactions" value="6"/>
</dbReference>
<dbReference type="STRING" id="284812.O13919"/>
<dbReference type="iPTMnet" id="O13919"/>
<dbReference type="PaxDb" id="4896-SPAC23C11.15.1"/>
<dbReference type="EnsemblFungi" id="SPAC23C11.15.1">
    <property type="protein sequence ID" value="SPAC23C11.15.1:pep"/>
    <property type="gene ID" value="SPAC23C11.15"/>
</dbReference>
<dbReference type="GeneID" id="2541624"/>
<dbReference type="KEGG" id="spo:2541624"/>
<dbReference type="PomBase" id="SPAC23C11.15">
    <property type="gene designation" value="pst2"/>
</dbReference>
<dbReference type="VEuPathDB" id="FungiDB:SPAC23C11.15"/>
<dbReference type="eggNOG" id="KOG4204">
    <property type="taxonomic scope" value="Eukaryota"/>
</dbReference>
<dbReference type="HOGENOM" id="CLU_001360_2_2_1"/>
<dbReference type="InParanoid" id="O13919"/>
<dbReference type="OMA" id="FYYGNKA"/>
<dbReference type="PhylomeDB" id="O13919"/>
<dbReference type="PRO" id="PR:O13919"/>
<dbReference type="Proteomes" id="UP000002485">
    <property type="component" value="Chromosome I"/>
</dbReference>
<dbReference type="GO" id="GO:0000785">
    <property type="term" value="C:chromatin"/>
    <property type="evidence" value="ECO:0000318"/>
    <property type="project" value="GO_Central"/>
</dbReference>
<dbReference type="GO" id="GO:0005634">
    <property type="term" value="C:nucleus"/>
    <property type="evidence" value="ECO:0000314"/>
    <property type="project" value="PomBase"/>
</dbReference>
<dbReference type="GO" id="GO:0032221">
    <property type="term" value="C:Rpd3S complex"/>
    <property type="evidence" value="ECO:0000314"/>
    <property type="project" value="PomBase"/>
</dbReference>
<dbReference type="GO" id="GO:0070822">
    <property type="term" value="C:Sin3-type complex"/>
    <property type="evidence" value="ECO:0000318"/>
    <property type="project" value="GO_Central"/>
</dbReference>
<dbReference type="GO" id="GO:0060090">
    <property type="term" value="F:molecular adaptor activity"/>
    <property type="evidence" value="ECO:0000269"/>
    <property type="project" value="PomBase"/>
</dbReference>
<dbReference type="GO" id="GO:0003714">
    <property type="term" value="F:transcription corepressor activity"/>
    <property type="evidence" value="ECO:0000318"/>
    <property type="project" value="GO_Central"/>
</dbReference>
<dbReference type="GO" id="GO:0000122">
    <property type="term" value="P:negative regulation of transcription by RNA polymerase II"/>
    <property type="evidence" value="ECO:0000318"/>
    <property type="project" value="GO_Central"/>
</dbReference>
<dbReference type="GO" id="GO:0045815">
    <property type="term" value="P:transcription initiation-coupled chromatin remodeling"/>
    <property type="evidence" value="ECO:0000305"/>
    <property type="project" value="PomBase"/>
</dbReference>
<dbReference type="FunFam" id="1.20.1160.11:FF:000021">
    <property type="match status" value="1"/>
</dbReference>
<dbReference type="Gene3D" id="1.20.1160.11">
    <property type="entry name" value="Paired amphipathic helix"/>
    <property type="match status" value="3"/>
</dbReference>
<dbReference type="InterPro" id="IPR013194">
    <property type="entry name" value="HDAC_interact_dom"/>
</dbReference>
<dbReference type="InterPro" id="IPR003822">
    <property type="entry name" value="PAH"/>
</dbReference>
<dbReference type="InterPro" id="IPR036600">
    <property type="entry name" value="PAH_sf"/>
</dbReference>
<dbReference type="InterPro" id="IPR039774">
    <property type="entry name" value="Sin3-like"/>
</dbReference>
<dbReference type="InterPro" id="IPR031693">
    <property type="entry name" value="Sin3_C"/>
</dbReference>
<dbReference type="PANTHER" id="PTHR12346:SF58">
    <property type="entry name" value="PAIRED AMPHIPATHIC HELIX PROTEIN PST2"/>
    <property type="match status" value="1"/>
</dbReference>
<dbReference type="PANTHER" id="PTHR12346">
    <property type="entry name" value="SIN3B-RELATED"/>
    <property type="match status" value="1"/>
</dbReference>
<dbReference type="Pfam" id="PF02671">
    <property type="entry name" value="PAH"/>
    <property type="match status" value="2"/>
</dbReference>
<dbReference type="Pfam" id="PF08295">
    <property type="entry name" value="Sin3_corepress"/>
    <property type="match status" value="1"/>
</dbReference>
<dbReference type="Pfam" id="PF16879">
    <property type="entry name" value="Sin3a_C"/>
    <property type="match status" value="1"/>
</dbReference>
<dbReference type="SMART" id="SM00761">
    <property type="entry name" value="HDAC_interact"/>
    <property type="match status" value="1"/>
</dbReference>
<dbReference type="SUPFAM" id="SSF47762">
    <property type="entry name" value="PAH2 domain"/>
    <property type="match status" value="3"/>
</dbReference>
<dbReference type="PROSITE" id="PS51477">
    <property type="entry name" value="PAH"/>
    <property type="match status" value="3"/>
</dbReference>
<proteinExistence type="evidence at protein level"/>
<reference key="1">
    <citation type="journal article" date="2002" name="Nature">
        <title>The genome sequence of Schizosaccharomyces pombe.</title>
        <authorList>
            <person name="Wood V."/>
            <person name="Gwilliam R."/>
            <person name="Rajandream M.A."/>
            <person name="Lyne M.H."/>
            <person name="Lyne R."/>
            <person name="Stewart A."/>
            <person name="Sgouros J.G."/>
            <person name="Peat N."/>
            <person name="Hayles J."/>
            <person name="Baker S.G."/>
            <person name="Basham D."/>
            <person name="Bowman S."/>
            <person name="Brooks K."/>
            <person name="Brown D."/>
            <person name="Brown S."/>
            <person name="Chillingworth T."/>
            <person name="Churcher C.M."/>
            <person name="Collins M."/>
            <person name="Connor R."/>
            <person name="Cronin A."/>
            <person name="Davis P."/>
            <person name="Feltwell T."/>
            <person name="Fraser A."/>
            <person name="Gentles S."/>
            <person name="Goble A."/>
            <person name="Hamlin N."/>
            <person name="Harris D.E."/>
            <person name="Hidalgo J."/>
            <person name="Hodgson G."/>
            <person name="Holroyd S."/>
            <person name="Hornsby T."/>
            <person name="Howarth S."/>
            <person name="Huckle E.J."/>
            <person name="Hunt S."/>
            <person name="Jagels K."/>
            <person name="James K.D."/>
            <person name="Jones L."/>
            <person name="Jones M."/>
            <person name="Leather S."/>
            <person name="McDonald S."/>
            <person name="McLean J."/>
            <person name="Mooney P."/>
            <person name="Moule S."/>
            <person name="Mungall K.L."/>
            <person name="Murphy L.D."/>
            <person name="Niblett D."/>
            <person name="Odell C."/>
            <person name="Oliver K."/>
            <person name="O'Neil S."/>
            <person name="Pearson D."/>
            <person name="Quail M.A."/>
            <person name="Rabbinowitsch E."/>
            <person name="Rutherford K.M."/>
            <person name="Rutter S."/>
            <person name="Saunders D."/>
            <person name="Seeger K."/>
            <person name="Sharp S."/>
            <person name="Skelton J."/>
            <person name="Simmonds M.N."/>
            <person name="Squares R."/>
            <person name="Squares S."/>
            <person name="Stevens K."/>
            <person name="Taylor K."/>
            <person name="Taylor R.G."/>
            <person name="Tivey A."/>
            <person name="Walsh S.V."/>
            <person name="Warren T."/>
            <person name="Whitehead S."/>
            <person name="Woodward J.R."/>
            <person name="Volckaert G."/>
            <person name="Aert R."/>
            <person name="Robben J."/>
            <person name="Grymonprez B."/>
            <person name="Weltjens I."/>
            <person name="Vanstreels E."/>
            <person name="Rieger M."/>
            <person name="Schaefer M."/>
            <person name="Mueller-Auer S."/>
            <person name="Gabel C."/>
            <person name="Fuchs M."/>
            <person name="Duesterhoeft A."/>
            <person name="Fritzc C."/>
            <person name="Holzer E."/>
            <person name="Moestl D."/>
            <person name="Hilbert H."/>
            <person name="Borzym K."/>
            <person name="Langer I."/>
            <person name="Beck A."/>
            <person name="Lehrach H."/>
            <person name="Reinhardt R."/>
            <person name="Pohl T.M."/>
            <person name="Eger P."/>
            <person name="Zimmermann W."/>
            <person name="Wedler H."/>
            <person name="Wambutt R."/>
            <person name="Purnelle B."/>
            <person name="Goffeau A."/>
            <person name="Cadieu E."/>
            <person name="Dreano S."/>
            <person name="Gloux S."/>
            <person name="Lelaure V."/>
            <person name="Mottier S."/>
            <person name="Galibert F."/>
            <person name="Aves S.J."/>
            <person name="Xiang Z."/>
            <person name="Hunt C."/>
            <person name="Moore K."/>
            <person name="Hurst S.M."/>
            <person name="Lucas M."/>
            <person name="Rochet M."/>
            <person name="Gaillardin C."/>
            <person name="Tallada V.A."/>
            <person name="Garzon A."/>
            <person name="Thode G."/>
            <person name="Daga R.R."/>
            <person name="Cruzado L."/>
            <person name="Jimenez J."/>
            <person name="Sanchez M."/>
            <person name="del Rey F."/>
            <person name="Benito J."/>
            <person name="Dominguez A."/>
            <person name="Revuelta J.L."/>
            <person name="Moreno S."/>
            <person name="Armstrong J."/>
            <person name="Forsburg S.L."/>
            <person name="Cerutti L."/>
            <person name="Lowe T."/>
            <person name="McCombie W.R."/>
            <person name="Paulsen I."/>
            <person name="Potashkin J."/>
            <person name="Shpakovski G.V."/>
            <person name="Ussery D."/>
            <person name="Barrell B.G."/>
            <person name="Nurse P."/>
        </authorList>
    </citation>
    <scope>NUCLEOTIDE SEQUENCE [LARGE SCALE GENOMIC DNA]</scope>
    <source>
        <strain>972 / ATCC 24843</strain>
    </source>
</reference>
<reference key="2">
    <citation type="journal article" date="1999" name="Mol. Cell. Biol.">
        <title>A new member of the Sin3 family of corepressors is essential for cell viability and required for retroelement propagation in fission yeast.</title>
        <authorList>
            <person name="Dang V.D."/>
            <person name="Benedik M.J."/>
            <person name="Ekwall K."/>
            <person name="Choi J."/>
            <person name="Allshire R.C."/>
            <person name="Levin H.L."/>
        </authorList>
    </citation>
    <scope>GENE NAME</scope>
</reference>
<reference key="3">
    <citation type="journal article" date="2003" name="EMBO J.">
        <title>Alp13, an MRG family protein, is a component of fission yeast Clr6 histone deacetylase required for genomic integrity.</title>
        <authorList>
            <person name="Nakayama J."/>
            <person name="Xiao G."/>
            <person name="Noma K."/>
            <person name="Malikzay A."/>
            <person name="Bjerling P."/>
            <person name="Ekwall K."/>
            <person name="Kobayashi R."/>
            <person name="Grewal S.I.S."/>
        </authorList>
    </citation>
    <scope>PROTEIN SEQUENCE OF 87-104; 280-291; 386-395; 424-446; 608-637; 678-709; 780-788; 819-834; 869-883; 925-937 AND 1055-1075</scope>
    <scope>FUNCTION</scope>
    <scope>SUBUNIT</scope>
    <scope>SUBCELLULAR LOCATION</scope>
</reference>
<reference key="4">
    <citation type="journal article" date="2008" name="J. Proteome Res.">
        <title>Phosphoproteome analysis of fission yeast.</title>
        <authorList>
            <person name="Wilson-Grady J.T."/>
            <person name="Villen J."/>
            <person name="Gygi S.P."/>
        </authorList>
    </citation>
    <scope>PHOSPHORYLATION [LARGE SCALE ANALYSIS] AT SER-641 AND SER-643</scope>
    <scope>IDENTIFICATION BY MASS SPECTROMETRY</scope>
</reference>
<protein>
    <recommendedName>
        <fullName>Paired amphipathic helix protein pst2</fullName>
    </recommendedName>
    <alternativeName>
        <fullName>SIN3 homolog 2</fullName>
    </alternativeName>
</protein>
<evidence type="ECO:0000255" key="1">
    <source>
        <dbReference type="PROSITE-ProRule" id="PRU00810"/>
    </source>
</evidence>
<evidence type="ECO:0000256" key="2">
    <source>
        <dbReference type="SAM" id="MobiDB-lite"/>
    </source>
</evidence>
<evidence type="ECO:0000269" key="3">
    <source>
    </source>
</evidence>
<evidence type="ECO:0000269" key="4">
    <source>
    </source>
</evidence>
<evidence type="ECO:0007829" key="5">
    <source>
        <dbReference type="PDB" id="8I02"/>
    </source>
</evidence>
<keyword id="KW-0002">3D-structure</keyword>
<keyword id="KW-0156">Chromatin regulator</keyword>
<keyword id="KW-0903">Direct protein sequencing</keyword>
<keyword id="KW-0539">Nucleus</keyword>
<keyword id="KW-0597">Phosphoprotein</keyword>
<keyword id="KW-1185">Reference proteome</keyword>
<keyword id="KW-0677">Repeat</keyword>
<keyword id="KW-0804">Transcription</keyword>
<keyword id="KW-0805">Transcription regulation</keyword>
<organism>
    <name type="scientific">Schizosaccharomyces pombe (strain 972 / ATCC 24843)</name>
    <name type="common">Fission yeast</name>
    <dbReference type="NCBI Taxonomy" id="284812"/>
    <lineage>
        <taxon>Eukaryota</taxon>
        <taxon>Fungi</taxon>
        <taxon>Dikarya</taxon>
        <taxon>Ascomycota</taxon>
        <taxon>Taphrinomycotina</taxon>
        <taxon>Schizosaccharomycetes</taxon>
        <taxon>Schizosaccharomycetales</taxon>
        <taxon>Schizosaccharomycetaceae</taxon>
        <taxon>Schizosaccharomyces</taxon>
    </lineage>
</organism>